<reference evidence="5 6" key="1">
    <citation type="journal article" date="2009" name="Comp. Biochem. Physiol.">
        <title>Characterization of antimicrobial peptides isolated from the skin of the Chinese frog, Rana dybowskii.</title>
        <authorList>
            <person name="Jin L.-L."/>
            <person name="Li Q."/>
            <person name="Song S.-S."/>
            <person name="Feng K."/>
            <person name="Zhang D.-B."/>
            <person name="Wang Q.-Y."/>
            <person name="Chen Y.-H."/>
        </authorList>
    </citation>
    <scope>NUCLEOTIDE SEQUENCE [MRNA]</scope>
    <scope>FUNCTION</scope>
    <scope>TISSUE SPECIFICITY</scope>
    <source>
        <tissue evidence="6">Skin</tissue>
    </source>
</reference>
<organism>
    <name type="scientific">Rana dybowskii</name>
    <name type="common">Dybovsky's frog</name>
    <name type="synonym">Korean brown frog</name>
    <dbReference type="NCBI Taxonomy" id="71582"/>
    <lineage>
        <taxon>Eukaryota</taxon>
        <taxon>Metazoa</taxon>
        <taxon>Chordata</taxon>
        <taxon>Craniata</taxon>
        <taxon>Vertebrata</taxon>
        <taxon>Euteleostomi</taxon>
        <taxon>Amphibia</taxon>
        <taxon>Batrachia</taxon>
        <taxon>Anura</taxon>
        <taxon>Neobatrachia</taxon>
        <taxon>Ranoidea</taxon>
        <taxon>Ranidae</taxon>
        <taxon>Rana</taxon>
        <taxon>Rana</taxon>
    </lineage>
</organism>
<accession>B3VZU2</accession>
<proteinExistence type="evidence at transcript level"/>
<sequence>MFTLKKSLLLLFFLGVINVSLCEEERDADEEERRDDPEERDVEVEKRFFPLALLCKVFKKC</sequence>
<evidence type="ECO:0000250" key="1">
    <source>
        <dbReference type="UniProtKB" id="P32412"/>
    </source>
</evidence>
<evidence type="ECO:0000255" key="2"/>
<evidence type="ECO:0000269" key="3">
    <source>
    </source>
</evidence>
<evidence type="ECO:0000303" key="4">
    <source>
    </source>
</evidence>
<evidence type="ECO:0000305" key="5"/>
<evidence type="ECO:0000312" key="6">
    <source>
        <dbReference type="EMBL" id="ACF08002.1"/>
    </source>
</evidence>
<feature type="signal peptide" evidence="2 6">
    <location>
        <begin position="1"/>
        <end position="22"/>
    </location>
</feature>
<feature type="propeptide" id="PRO_0000391431" evidence="1">
    <location>
        <begin position="23"/>
        <end position="45"/>
    </location>
</feature>
<feature type="peptide" id="PRO_5000381479" description="Japonicin-1CDYa" evidence="3">
    <location>
        <begin position="48"/>
        <end position="61"/>
    </location>
</feature>
<feature type="disulfide bond" evidence="1">
    <location>
        <begin position="55"/>
        <end position="61"/>
    </location>
</feature>
<keyword id="KW-0878">Amphibian defense peptide</keyword>
<keyword id="KW-0044">Antibiotic</keyword>
<keyword id="KW-0929">Antimicrobial</keyword>
<keyword id="KW-0165">Cleavage on pair of basic residues</keyword>
<keyword id="KW-1015">Disulfide bond</keyword>
<keyword id="KW-0964">Secreted</keyword>
<keyword id="KW-0732">Signal</keyword>
<dbReference type="EMBL" id="EU827802">
    <property type="protein sequence ID" value="ACF08002.1"/>
    <property type="molecule type" value="mRNA"/>
</dbReference>
<dbReference type="GO" id="GO:0005576">
    <property type="term" value="C:extracellular region"/>
    <property type="evidence" value="ECO:0000250"/>
    <property type="project" value="UniProtKB"/>
</dbReference>
<dbReference type="GO" id="GO:0050829">
    <property type="term" value="P:defense response to Gram-negative bacterium"/>
    <property type="evidence" value="ECO:0000314"/>
    <property type="project" value="UniProtKB"/>
</dbReference>
<dbReference type="GO" id="GO:0050830">
    <property type="term" value="P:defense response to Gram-positive bacterium"/>
    <property type="evidence" value="ECO:0000314"/>
    <property type="project" value="UniProtKB"/>
</dbReference>
<dbReference type="InterPro" id="IPR004275">
    <property type="entry name" value="Frog_antimicrobial_propeptide"/>
</dbReference>
<dbReference type="Pfam" id="PF03032">
    <property type="entry name" value="FSAP_sig_propep"/>
    <property type="match status" value="1"/>
</dbReference>
<comment type="function">
    <text evidence="3">Antimicrobial peptide. Has low activity against the Gram-positive bacterium S.aureus (MIC&gt;100 uM) and the Gram-negative bacterium E.coli (MIC=25 uM). Lacks hemolytic activity against human erythrocytes.</text>
</comment>
<comment type="subcellular location">
    <subcellularLocation>
        <location evidence="1">Secreted</location>
    </subcellularLocation>
</comment>
<comment type="tissue specificity">
    <text evidence="3">Expressed by the skin glands.</text>
</comment>
<comment type="similarity">
    <text evidence="2">Belongs to the frog skin active peptide (FSAP) family. Brevinin subfamily.</text>
</comment>
<protein>
    <recommendedName>
        <fullName evidence="4 6">Japonicin-1CDYa</fullName>
    </recommendedName>
</protein>
<name>JAP1A_RANDY</name>